<keyword id="KW-0903">Direct protein sequencing</keyword>
<keyword id="KW-1015">Disulfide bond</keyword>
<keyword id="KW-0528">Neurotoxin</keyword>
<keyword id="KW-0638">Presynaptic neurotoxin</keyword>
<keyword id="KW-0964">Secreted</keyword>
<keyword id="KW-0800">Toxin</keyword>
<organism>
    <name type="scientific">Acanthophis antarcticus</name>
    <name type="common">Common death adder</name>
    <dbReference type="NCBI Taxonomy" id="8605"/>
    <lineage>
        <taxon>Eukaryota</taxon>
        <taxon>Metazoa</taxon>
        <taxon>Chordata</taxon>
        <taxon>Craniata</taxon>
        <taxon>Vertebrata</taxon>
        <taxon>Euteleostomi</taxon>
        <taxon>Lepidosauria</taxon>
        <taxon>Squamata</taxon>
        <taxon>Bifurcata</taxon>
        <taxon>Unidentata</taxon>
        <taxon>Episquamata</taxon>
        <taxon>Toxicofera</taxon>
        <taxon>Serpentes</taxon>
        <taxon>Colubroidea</taxon>
        <taxon>Elapidae</taxon>
        <taxon>Hydrophiinae</taxon>
        <taxon>Acanthophis</taxon>
    </lineage>
</organism>
<proteinExistence type="evidence at protein level"/>
<accession>P86525</accession>
<protein>
    <recommendedName>
        <fullName>Phospholipase A2 homolog P-elapitoxin-Aa1a gamma chain</fullName>
        <shortName evidence="4">P-EPTX-Aa1a gamma chain</shortName>
        <shortName>svPLA2 homolog</shortName>
    </recommendedName>
</protein>
<sequence length="20" mass="2253">SIPLPSLNFEQFGNMIQCTI</sequence>
<feature type="chain" id="PRO_0000395309" description="Phospholipase A2 homolog P-elapitoxin-Aa1a gamma chain">
    <location>
        <begin position="1"/>
        <end position="20" status="greater than"/>
    </location>
</feature>
<feature type="disulfide bond" evidence="1">
    <location>
        <begin position="18"/>
        <end status="unknown"/>
    </location>
</feature>
<feature type="non-terminal residue" evidence="4">
    <location>
        <position position="20"/>
    </location>
</feature>
<reference evidence="5" key="1">
    <citation type="journal article" date="2010" name="Biochem. Pharmacol.">
        <title>Characterisation of the heterotrimeric presynaptic phospholipase A(2) neurotoxin complex from the venom of the common death adder (Acanthophis antarcticus).</title>
        <authorList>
            <person name="Blacklow B."/>
            <person name="Escoubas P."/>
            <person name="Nicholson G.M."/>
        </authorList>
    </citation>
    <scope>PROTEIN SEQUENCE</scope>
    <scope>FUNCTION</scope>
    <scope>SUBUNIT</scope>
    <scope>SUBCELLULAR LOCATION</scope>
    <scope>TISSUE SPECIFICITY</scope>
    <scope>GLYCOSYLATION</scope>
    <scope>MASS SPECTROMETRY</scope>
    <source>
        <strain evidence="3">New South Wales</strain>
        <tissue evidence="3">Venom</tissue>
    </source>
</reference>
<comment type="function">
    <text evidence="3">Heterotrimer: Snake venom phospholipase A2 (PLA2) that has presynaptic neurotoxicity. Inhibits nerve-evoked twitch contractions but not responses to cholinergic agonists acetylcholine and carbachol and to depolarizing agonist KCl. Causes a fade in tetanic contractions. Displays a triphasic mode of action with depression, enhancement and blockade of neurotransmission. Does not display myotoxic activity such as changes in baseline muscle tension or inhibition of directly stimulated muscle twitches. All subunits are necessary for maximum toxicity.</text>
</comment>
<comment type="function">
    <text evidence="3">Monomer: the gamma chain has no significant enzymatic activity and is not toxic by itself.</text>
</comment>
<comment type="subunit">
    <text evidence="3">Heterotrimer of alpha, beta and gamma chains, each related to PLA2.</text>
</comment>
<comment type="subcellular location">
    <subcellularLocation>
        <location evidence="3">Secreted</location>
    </subcellularLocation>
</comment>
<comment type="tissue specificity">
    <text evidence="3">Expressed by the venom gland.</text>
</comment>
<comment type="PTM">
    <text evidence="3">Glycosylated.</text>
</comment>
<comment type="mass spectrometry" mass="17373.0" method="MALDI" evidence="3">
    <text>glycosylated form.</text>
</comment>
<comment type="mass spectrometry" mass="17632.0" method="MALDI" evidence="3">
    <text>glycosylated form.</text>
</comment>
<comment type="mass spectrometry" mass="17836.0" method="MALDI" evidence="3">
    <text>glycosylated form.</text>
</comment>
<comment type="miscellaneous">
    <text>Preincubation of P-elapitoxin-Aa1a with monovalent antivenom or suramin prevents or delays toxicity, respectively. Antivenom fails to reverse neurotoxicity when applied at point of 90% neuromuscular blockade. Treatment of P-elapitoxin-Aa1a with 4-bromophenacyl bromide drastically reduces enzymatic activity and toxicity, presumably by alkylating a His residue at the active site.</text>
</comment>
<comment type="similarity">
    <text evidence="2">Belongs to the phospholipase A2 family. Group I subfamily.</text>
</comment>
<dbReference type="GO" id="GO:0005576">
    <property type="term" value="C:extracellular region"/>
    <property type="evidence" value="ECO:0007669"/>
    <property type="project" value="UniProtKB-SubCell"/>
</dbReference>
<dbReference type="GO" id="GO:0090729">
    <property type="term" value="F:toxin activity"/>
    <property type="evidence" value="ECO:0007669"/>
    <property type="project" value="UniProtKB-KW"/>
</dbReference>
<name>PA2HC_ACAAN</name>
<evidence type="ECO:0000250" key="1">
    <source>
        <dbReference type="UniProtKB" id="Q5G290"/>
    </source>
</evidence>
<evidence type="ECO:0000255" key="2"/>
<evidence type="ECO:0000269" key="3">
    <source>
    </source>
</evidence>
<evidence type="ECO:0000303" key="4">
    <source>
    </source>
</evidence>
<evidence type="ECO:0000305" key="5"/>